<reference key="1">
    <citation type="journal article" date="1987" name="Eur. J. Biochem.">
        <title>Primary structure of the Streptomyces R61 extracellular DD-peptidase. 1. Cloning into Streptomyces lividans and nucleotide sequence of the gene.</title>
        <authorList>
            <person name="Duez C."/>
            <person name="Piron-Fraipont C."/>
            <person name="Joris B."/>
            <person name="Dusart J."/>
            <person name="Urdea M.S."/>
            <person name="Martial J.A."/>
            <person name="Frere J.-M."/>
            <person name="Ghuysen J.-M."/>
        </authorList>
    </citation>
    <scope>NUCLEOTIDE SEQUENCE [GENOMIC DNA]</scope>
</reference>
<reference key="2">
    <citation type="journal article" date="1994" name="Eur. J. Biochem.">
        <title>Primary structure of the Streptomyces R61 extracellular DD-peptidase. 1. Cloning into Streptomyces lividans and nucleotide sequence of the gene.</title>
        <authorList>
            <person name="Duez C."/>
            <person name="Piron-Fraipont C."/>
            <person name="Joris B."/>
            <person name="Dusart J."/>
            <person name="Urdea M.S."/>
            <person name="Martial J.A."/>
            <person name="Frere J.-M."/>
            <person name="Ghuysen J.-M."/>
        </authorList>
    </citation>
    <scope>NUCLEOTIDE SEQUENCE [GENOMIC DNA]</scope>
    <scope>SEQUENCE REVISION</scope>
</reference>
<reference key="3">
    <citation type="journal article" date="1987" name="Eur. J. Biochem.">
        <title>Primary structure of the Streptomyces R61 extracellular DD-peptidase. 2. Amino acid sequence data.</title>
        <authorList>
            <person name="Joris B."/>
            <person name="Jacques P."/>
            <person name="Frere J.-M."/>
            <person name="Ghuysen J.-M."/>
            <person name="van Beeumen J."/>
        </authorList>
    </citation>
    <scope>PARTIAL PROTEIN SEQUENCE</scope>
</reference>
<reference key="4">
    <citation type="journal article" date="1990" name="Mol. Gen. Genet.">
        <title>Transcriptional analysis of the DD-peptidase/penicillin-binding protein-encoding dac gene of Streptomyces R61: use of the promoter and signal sequences in a secretion vector.</title>
        <authorList>
            <person name="Piron-Fraipont C."/>
            <person name="Lenzini M.V."/>
            <person name="Dusart J."/>
            <person name="Ghuysen J.-M."/>
        </authorList>
    </citation>
    <scope>NUCLEOTIDE SEQUENCE [GENOMIC DNA] OF 1-91</scope>
</reference>
<reference key="5">
    <citation type="journal article" date="1990" name="Antimicrob. Agents Chemother.">
        <title>Different modes of vancomycin and D-alanyl-D-alanine peptidase binding to cell wall peptide and a possible role for the vancomycin resistance protein.</title>
        <authorList>
            <person name="Knox J.R."/>
            <person name="Pratt R.F."/>
        </authorList>
    </citation>
    <scope>3D-STRUCTURE MODELING</scope>
</reference>
<reference key="6">
    <citation type="journal article" date="1985" name="J. Biol. Chem.">
        <title>2.8-A structure of penicillin-sensitive D-alanyl carboxypeptidase-transpeptidase from Streptomyces R61 and complexes with beta-lactams.</title>
        <authorList>
            <person name="Kelly J.A."/>
            <person name="Knox J.R."/>
            <person name="Moews P.C."/>
            <person name="Hite G.J."/>
            <person name="Bartolone J.B."/>
            <person name="Zhao H."/>
            <person name="Joris B."/>
            <person name="Frere J.-M."/>
            <person name="Ghuysen J.-M."/>
        </authorList>
    </citation>
    <scope>X-RAY CRYSTALLOGRAPHY (2.8 ANGSTROMS)</scope>
</reference>
<reference key="7">
    <citation type="journal article" date="1995" name="J. Mol. Biol.">
        <title>The refined crystallographic structure of a DD-peptidase penicillin-target enzyme at 1.6-A resolution.</title>
        <authorList>
            <person name="Kelly J.A."/>
            <person name="Kuzin A.P."/>
        </authorList>
    </citation>
    <scope>X-RAY CRYSTALLOGRAPHY (1.6 ANGSTROMS)</scope>
</reference>
<reference key="8">
    <citation type="journal article" date="2002" name="J. Mol. Biol.">
        <title>Structures of two kinetic intermediates reveal species specificity of penicillin-binding proteins.</title>
        <authorList>
            <person name="McDonough M.A."/>
            <person name="Anderson J.W."/>
            <person name="Silvaggi N.R."/>
            <person name="Pratt R.F."/>
            <person name="Knox J.R."/>
            <person name="Kelly J.A."/>
        </authorList>
    </citation>
    <scope>X-RAY CRYSTALLOGRAPHY (1.25 ANGSTROMS) OF 32-380 IN COMPLEX WITH SUBSTRATES</scope>
    <scope>ACTIVE SITE</scope>
</reference>
<reference key="9">
    <citation type="journal article" date="2003" name="Biochemistry">
        <title>The crystal structure of phosphonate-inhibited D-Ala-D-Ala peptidase reveals an analogue of a tetrahedral transition state.</title>
        <authorList>
            <person name="Silvaggi N.R."/>
            <person name="Anderson J.W."/>
            <person name="Brinsmade S.R."/>
            <person name="Pratt R.F."/>
            <person name="Kelly J.A."/>
        </authorList>
    </citation>
    <scope>X-RAY CRYSTALLOGRAPHY (1.12 ANGSTROMS) OF 32-380 IN COMPLEX WITH SUBSTRATES</scope>
    <scope>ACTIVE SITE</scope>
</reference>
<reference key="10">
    <citation type="journal article" date="2005" name="J. Mol. Biol.">
        <title>Crystal structures of complexes between the R61 DD-peptidase and peptidoglycan-mimetic beta-lactams: a non-covalent complex with a 'perfect penicillin'.</title>
        <authorList>
            <person name="Silvaggi N.R."/>
            <person name="Josephine H.R."/>
            <person name="Kuzin A.P."/>
            <person name="Nagarajan R."/>
            <person name="Pratt R.F."/>
            <person name="Kelly J.A."/>
        </authorList>
    </citation>
    <scope>X-RAY CRYSTALLOGRAPHY (1.07 ANGSTROMS) OF 32-380 IN COMPLEX WITH SUBSTRATE ANALOG</scope>
    <scope>ACTIVE SITE</scope>
</reference>
<organism>
    <name type="scientific">Streptomyces sp. (strain R61)</name>
    <dbReference type="NCBI Taxonomy" id="31952"/>
    <lineage>
        <taxon>Bacteria</taxon>
        <taxon>Bacillati</taxon>
        <taxon>Actinomycetota</taxon>
        <taxon>Actinomycetes</taxon>
        <taxon>Kitasatosporales</taxon>
        <taxon>Streptomycetaceae</taxon>
        <taxon>Streptomyces</taxon>
    </lineage>
</organism>
<dbReference type="EC" id="3.4.16.4"/>
<dbReference type="EMBL" id="X05109">
    <property type="protein sequence ID" value="CAA28756.1"/>
    <property type="molecule type" value="Genomic_DNA"/>
</dbReference>
<dbReference type="EMBL" id="X55810">
    <property type="protein sequence ID" value="CAB97254.1"/>
    <property type="molecule type" value="Genomic_DNA"/>
</dbReference>
<dbReference type="PIR" id="S48220">
    <property type="entry name" value="S48220"/>
</dbReference>
<dbReference type="PDB" id="1CEF">
    <property type="method" value="X-ray"/>
    <property type="resolution" value="2.04 A"/>
    <property type="chains" value="A=32-380"/>
</dbReference>
<dbReference type="PDB" id="1CEG">
    <property type="method" value="X-ray"/>
    <property type="resolution" value="1.80 A"/>
    <property type="chains" value="A=32-380"/>
</dbReference>
<dbReference type="PDB" id="1HVB">
    <property type="method" value="X-ray"/>
    <property type="resolution" value="1.17 A"/>
    <property type="chains" value="A=32-380"/>
</dbReference>
<dbReference type="PDB" id="1IKG">
    <property type="method" value="X-ray"/>
    <property type="resolution" value="1.90 A"/>
    <property type="chains" value="A=32-380"/>
</dbReference>
<dbReference type="PDB" id="1IKI">
    <property type="method" value="X-ray"/>
    <property type="resolution" value="1.25 A"/>
    <property type="chains" value="A=32-380"/>
</dbReference>
<dbReference type="PDB" id="1MPL">
    <property type="method" value="X-ray"/>
    <property type="resolution" value="1.12 A"/>
    <property type="chains" value="A=32-380"/>
</dbReference>
<dbReference type="PDB" id="1PW1">
    <property type="method" value="X-ray"/>
    <property type="resolution" value="1.20 A"/>
    <property type="chains" value="A=32-380"/>
</dbReference>
<dbReference type="PDB" id="1PW8">
    <property type="method" value="X-ray"/>
    <property type="resolution" value="1.30 A"/>
    <property type="chains" value="A=32-380"/>
</dbReference>
<dbReference type="PDB" id="1PWC">
    <property type="method" value="X-ray"/>
    <property type="resolution" value="1.10 A"/>
    <property type="chains" value="A=32-380"/>
</dbReference>
<dbReference type="PDB" id="1PWD">
    <property type="method" value="X-ray"/>
    <property type="resolution" value="1.20 A"/>
    <property type="chains" value="A=32-380"/>
</dbReference>
<dbReference type="PDB" id="1PWG">
    <property type="method" value="X-ray"/>
    <property type="resolution" value="1.07 A"/>
    <property type="chains" value="A=32-380"/>
</dbReference>
<dbReference type="PDB" id="1SCW">
    <property type="method" value="X-ray"/>
    <property type="resolution" value="1.13 A"/>
    <property type="chains" value="A=32-380"/>
</dbReference>
<dbReference type="PDB" id="1SDE">
    <property type="method" value="X-ray"/>
    <property type="resolution" value="1.15 A"/>
    <property type="chains" value="A=32-378"/>
</dbReference>
<dbReference type="PDB" id="1YQS">
    <property type="method" value="X-ray"/>
    <property type="resolution" value="1.05 A"/>
    <property type="chains" value="A=32-380"/>
</dbReference>
<dbReference type="PDB" id="3PTE">
    <property type="method" value="X-ray"/>
    <property type="resolution" value="1.60 A"/>
    <property type="chains" value="A=32-380"/>
</dbReference>
<dbReference type="PDBsum" id="1CEF"/>
<dbReference type="PDBsum" id="1CEG"/>
<dbReference type="PDBsum" id="1HVB"/>
<dbReference type="PDBsum" id="1IKG"/>
<dbReference type="PDBsum" id="1IKI"/>
<dbReference type="PDBsum" id="1MPL"/>
<dbReference type="PDBsum" id="1PW1"/>
<dbReference type="PDBsum" id="1PW8"/>
<dbReference type="PDBsum" id="1PWC"/>
<dbReference type="PDBsum" id="1PWD"/>
<dbReference type="PDBsum" id="1PWG"/>
<dbReference type="PDBsum" id="1SCW"/>
<dbReference type="PDBsum" id="1SDE"/>
<dbReference type="PDBsum" id="1YQS"/>
<dbReference type="PDBsum" id="3PTE"/>
<dbReference type="SMR" id="P15555"/>
<dbReference type="ChEMBL" id="CHEMBL3350"/>
<dbReference type="DrugBank" id="DB03820">
    <property type="generic name" value="(2S,5R,6R)-6-({(6S)-6-[(Ammonioacetyl)amino]-6-carboxylatohexanoyl}amino)-3,3-dimethyl-7-oxo-4-thia-1-azabicyclo[3.2.0]heptane-2-carboxylate"/>
</dbReference>
<dbReference type="DrugBank" id="DB02514">
    <property type="generic name" value="(2Z)-3-{[Oxido(oxo)phosphoranyl]oxy}-2-phenylacrylate"/>
</dbReference>
<dbReference type="DrugBank" id="DB04488">
    <property type="generic name" value="(6S)-N-[(2S,3R,6R,7R)-3-(Acetyloxymethyl)-2-carboxy-8-oxo-5-thia-1-azabicyclo[4.2.0]octan-7-yl]-6-[(2-aminoacetyl)amino]-7-hydroxy-7-oxoheptanimidate"/>
</dbReference>
<dbReference type="DrugBank" id="DB04340">
    <property type="generic name" value="2-[(Dioxidophosphoranyl)oxy]benzoate"/>
</dbReference>
<dbReference type="DrugBank" id="DB00456">
    <property type="generic name" value="Cefalotin"/>
</dbReference>
<dbReference type="DrugBank" id="DB02136">
    <property type="generic name" value="Cephalosporin analog"/>
</dbReference>
<dbReference type="DrugBank" id="DB03313">
    <property type="generic name" value="Cephalosporin C"/>
</dbReference>
<dbReference type="DrugBank" id="DB03450">
    <property type="generic name" value="Cephalothin Group"/>
</dbReference>
<dbReference type="DrugBank" id="DB01786">
    <property type="generic name" value="D-Alanine"/>
</dbReference>
<dbReference type="DrugBank" id="DB03843">
    <property type="generic name" value="Formaldehyde"/>
</dbReference>
<dbReference type="DrugBank" id="DB01868">
    <property type="generic name" value="Glycyl-L-a-Aminopimelyl-E-(D-2-Aminoethyl)Phosphonate"/>
</dbReference>
<dbReference type="DrugBank" id="DB03927">
    <property type="generic name" value="Glycyl-L-alpha-amino-epsilon-pimelyl-D-alanine"/>
</dbReference>
<dbReference type="DrugBank" id="DB02578">
    <property type="generic name" value="N-[(6S)-6-Carboxy-6-(glycylamino)hexanoyl]-D-alanyl-D-alanine"/>
</dbReference>
<dbReference type="MEROPS" id="S12.001"/>
<dbReference type="BRENDA" id="3.4.16.4">
    <property type="organism ID" value="1284"/>
</dbReference>
<dbReference type="UniPathway" id="UPA00219"/>
<dbReference type="EvolutionaryTrace" id="P15555"/>
<dbReference type="GO" id="GO:0005576">
    <property type="term" value="C:extracellular region"/>
    <property type="evidence" value="ECO:0007669"/>
    <property type="project" value="UniProtKB-SubCell"/>
</dbReference>
<dbReference type="GO" id="GO:0009002">
    <property type="term" value="F:serine-type D-Ala-D-Ala carboxypeptidase activity"/>
    <property type="evidence" value="ECO:0007669"/>
    <property type="project" value="UniProtKB-EC"/>
</dbReference>
<dbReference type="GO" id="GO:0071555">
    <property type="term" value="P:cell wall organization"/>
    <property type="evidence" value="ECO:0007669"/>
    <property type="project" value="UniProtKB-KW"/>
</dbReference>
<dbReference type="GO" id="GO:0009252">
    <property type="term" value="P:peptidoglycan biosynthetic process"/>
    <property type="evidence" value="ECO:0007669"/>
    <property type="project" value="UniProtKB-UniPathway"/>
</dbReference>
<dbReference type="GO" id="GO:0006508">
    <property type="term" value="P:proteolysis"/>
    <property type="evidence" value="ECO:0007669"/>
    <property type="project" value="UniProtKB-KW"/>
</dbReference>
<dbReference type="GO" id="GO:0008360">
    <property type="term" value="P:regulation of cell shape"/>
    <property type="evidence" value="ECO:0007669"/>
    <property type="project" value="UniProtKB-KW"/>
</dbReference>
<dbReference type="Gene3D" id="3.40.710.10">
    <property type="entry name" value="DD-peptidase/beta-lactamase superfamily"/>
    <property type="match status" value="1"/>
</dbReference>
<dbReference type="InterPro" id="IPR050491">
    <property type="entry name" value="Bact_CellWall_Synth/Modif"/>
</dbReference>
<dbReference type="InterPro" id="IPR001466">
    <property type="entry name" value="Beta-lactam-related"/>
</dbReference>
<dbReference type="InterPro" id="IPR012338">
    <property type="entry name" value="Beta-lactam/transpept-like"/>
</dbReference>
<dbReference type="PANTHER" id="PTHR46825:SF7">
    <property type="entry name" value="D-ALANYL-D-ALANINE CARBOXYPEPTIDASE"/>
    <property type="match status" value="1"/>
</dbReference>
<dbReference type="PANTHER" id="PTHR46825">
    <property type="entry name" value="D-ALANYL-D-ALANINE-CARBOXYPEPTIDASE/ENDOPEPTIDASE AMPH"/>
    <property type="match status" value="1"/>
</dbReference>
<dbReference type="Pfam" id="PF00144">
    <property type="entry name" value="Beta-lactamase"/>
    <property type="match status" value="1"/>
</dbReference>
<dbReference type="SUPFAM" id="SSF56601">
    <property type="entry name" value="beta-lactamase/transpeptidase-like"/>
    <property type="match status" value="1"/>
</dbReference>
<accession>P15555</accession>
<accession>Q06656</accession>
<name>DAC_STRSR</name>
<evidence type="ECO:0000256" key="1">
    <source>
        <dbReference type="SAM" id="MobiDB-lite"/>
    </source>
</evidence>
<evidence type="ECO:0000269" key="2">
    <source>
    </source>
</evidence>
<evidence type="ECO:0000269" key="3">
    <source>
    </source>
</evidence>
<evidence type="ECO:0000269" key="4">
    <source>
    </source>
</evidence>
<evidence type="ECO:0000305" key="5"/>
<evidence type="ECO:0007829" key="6">
    <source>
        <dbReference type="PDB" id="1PWG"/>
    </source>
</evidence>
<evidence type="ECO:0007829" key="7">
    <source>
        <dbReference type="PDB" id="1SCW"/>
    </source>
</evidence>
<evidence type="ECO:0007829" key="8">
    <source>
        <dbReference type="PDB" id="1YQS"/>
    </source>
</evidence>
<feature type="signal peptide">
    <location>
        <begin position="1"/>
        <end position="31"/>
    </location>
</feature>
<feature type="chain" id="PRO_0000017050" description="D-alanyl-D-alanine carboxypeptidase">
    <location>
        <begin position="32"/>
        <end position="380"/>
    </location>
</feature>
<feature type="propeptide" id="PRO_0000017051">
    <location>
        <begin position="381"/>
        <end position="406"/>
    </location>
</feature>
<feature type="region of interest" description="Disordered" evidence="1">
    <location>
        <begin position="387"/>
        <end position="406"/>
    </location>
</feature>
<feature type="compositionally biased region" description="Basic and acidic residues" evidence="1">
    <location>
        <begin position="393"/>
        <end position="406"/>
    </location>
</feature>
<feature type="active site" description="Acyl-ester intermediate" evidence="2 3 4">
    <location>
        <position position="93"/>
    </location>
</feature>
<feature type="binding site" evidence="2 3 4">
    <location>
        <begin position="151"/>
        <end position="154"/>
    </location>
    <ligand>
        <name>substrate</name>
    </ligand>
</feature>
<feature type="binding site" evidence="2 3 4">
    <location>
        <begin position="190"/>
        <end position="192"/>
    </location>
    <ligand>
        <name>substrate</name>
    </ligand>
</feature>
<feature type="binding site" evidence="2 3 4">
    <location>
        <position position="316"/>
    </location>
    <ligand>
        <name>substrate</name>
    </ligand>
</feature>
<feature type="binding site" evidence="2 3 4">
    <location>
        <begin position="330"/>
        <end position="332"/>
    </location>
    <ligand>
        <name>substrate</name>
    </ligand>
</feature>
<feature type="binding site" evidence="2 3 4">
    <location>
        <begin position="357"/>
        <end position="358"/>
    </location>
    <ligand>
        <name>substrate</name>
    </ligand>
</feature>
<feature type="helix" evidence="8">
    <location>
        <begin position="39"/>
        <end position="51"/>
    </location>
</feature>
<feature type="strand" evidence="8">
    <location>
        <begin position="55"/>
        <end position="63"/>
    </location>
</feature>
<feature type="strand" evidence="8">
    <location>
        <begin position="66"/>
        <end position="75"/>
    </location>
</feature>
<feature type="turn" evidence="8">
    <location>
        <begin position="77"/>
        <end position="79"/>
    </location>
</feature>
<feature type="strand" evidence="8">
    <location>
        <begin position="88"/>
        <end position="90"/>
    </location>
</feature>
<feature type="helix" evidence="8">
    <location>
        <begin position="92"/>
        <end position="94"/>
    </location>
</feature>
<feature type="helix" evidence="8">
    <location>
        <begin position="95"/>
        <end position="108"/>
    </location>
</feature>
<feature type="helix" evidence="8">
    <location>
        <begin position="118"/>
        <end position="121"/>
    </location>
</feature>
<feature type="strand" evidence="6">
    <location>
        <begin position="125"/>
        <end position="127"/>
    </location>
</feature>
<feature type="helix" evidence="8">
    <location>
        <begin position="133"/>
        <end position="137"/>
    </location>
</feature>
<feature type="helix" evidence="8">
    <location>
        <begin position="147"/>
        <end position="150"/>
    </location>
</feature>
<feature type="strand" evidence="7">
    <location>
        <begin position="151"/>
        <end position="153"/>
    </location>
</feature>
<feature type="helix" evidence="8">
    <location>
        <begin position="154"/>
        <end position="161"/>
    </location>
</feature>
<feature type="helix" evidence="8">
    <location>
        <begin position="168"/>
        <end position="176"/>
    </location>
</feature>
<feature type="strand" evidence="8">
    <location>
        <begin position="181"/>
        <end position="183"/>
    </location>
</feature>
<feature type="helix" evidence="8">
    <location>
        <begin position="192"/>
        <end position="206"/>
    </location>
</feature>
<feature type="helix" evidence="8">
    <location>
        <begin position="210"/>
        <end position="217"/>
    </location>
</feature>
<feature type="turn" evidence="8">
    <location>
        <begin position="218"/>
        <end position="223"/>
    </location>
</feature>
<feature type="strand" evidence="8">
    <location>
        <begin position="238"/>
        <end position="240"/>
    </location>
</feature>
<feature type="turn" evidence="8">
    <location>
        <begin position="263"/>
        <end position="265"/>
    </location>
</feature>
<feature type="helix" evidence="8">
    <location>
        <begin position="266"/>
        <end position="268"/>
    </location>
</feature>
<feature type="helix" evidence="8">
    <location>
        <begin position="275"/>
        <end position="286"/>
    </location>
</feature>
<feature type="helix" evidence="8">
    <location>
        <begin position="293"/>
        <end position="299"/>
    </location>
</feature>
<feature type="strand" evidence="8">
    <location>
        <begin position="303"/>
        <end position="306"/>
    </location>
</feature>
<feature type="strand" evidence="8">
    <location>
        <begin position="309"/>
        <end position="311"/>
    </location>
</feature>
<feature type="strand" evidence="8">
    <location>
        <begin position="316"/>
        <end position="319"/>
    </location>
</feature>
<feature type="strand" evidence="8">
    <location>
        <begin position="325"/>
        <end position="333"/>
    </location>
</feature>
<feature type="strand" evidence="8">
    <location>
        <begin position="336"/>
        <end position="342"/>
    </location>
</feature>
<feature type="strand" evidence="8">
    <location>
        <begin position="346"/>
        <end position="358"/>
    </location>
</feature>
<feature type="helix" evidence="8">
    <location>
        <begin position="360"/>
        <end position="374"/>
    </location>
</feature>
<protein>
    <recommendedName>
        <fullName>D-alanyl-D-alanine carboxypeptidase</fullName>
        <shortName>DD-carboxypeptidase</shortName>
        <shortName>DD-peptidase</shortName>
        <ecNumber>3.4.16.4</ecNumber>
    </recommendedName>
</protein>
<sequence length="406" mass="42917">MVSGTVGRGTALGAVLLALLAVPAQAGTAAAADLPAPDDTGLQAVLHTALSQGAPGAMVRVDDNGTIHQLSEGVADRATGRAITTTDRFRVGSVTKSFSAVVLLQLVDEGKLDLDASVNTYLPGLLPDDRITVRQVMSHRSGLYDYTNDMFAQTVPGFESVRNKVFSYQDLITLSLKHGVTNAPGAAYSYSNTNFVVAGMLIEKLTGHSVATEYQNRIFTPLNLTDTFYVHPDTVIPGTHANGYLTPDEAGGALVDSTEQTVSWAQSAGAVISSTQDLDTFFSALMSGQLMSAAQLAQMQQWTTVNSTQGYGLGLRRRDLSCGISVYGHTGTVQGYYTYAFASKDGKRSVTALANTSNNVNVLNTMARTLESAFCGKPTTAKLRSATSSATTVERHEDIAPGIARD</sequence>
<proteinExistence type="evidence at protein level"/>
<comment type="function">
    <text>Catalyzes distinct carboxypeptidation and transpeptidation reactions during the last stages of wall peptidoglycan synthesis. Mistaking a beta-lactam antibiotic molecule for a normal substrate (i.e. a D-alanyl-D-alanine-terminated peptide), it becomes immobilized in the form of a long-lived, serine-ester-linked acyl enzyme and thus behave as penicillin-binding protein (PBP).</text>
</comment>
<comment type="catalytic activity">
    <reaction>
        <text>Preferential cleavage: (Ac)2-L-Lys-D-Ala-|-D-Ala. Also transpeptidation of peptidyl-alanyl moieties that are N-acyl substituents of D-alanine.</text>
        <dbReference type="EC" id="3.4.16.4"/>
    </reaction>
</comment>
<comment type="pathway">
    <text>Cell wall biogenesis; peptidoglycan biosynthesis.</text>
</comment>
<comment type="subcellular location">
    <subcellularLocation>
        <location>Secreted</location>
    </subcellularLocation>
</comment>
<comment type="similarity">
    <text evidence="5">Belongs to the peptidase S12 family.</text>
</comment>
<keyword id="KW-0002">3D-structure</keyword>
<keyword id="KW-0121">Carboxypeptidase</keyword>
<keyword id="KW-0133">Cell shape</keyword>
<keyword id="KW-0961">Cell wall biogenesis/degradation</keyword>
<keyword id="KW-0903">Direct protein sequencing</keyword>
<keyword id="KW-0378">Hydrolase</keyword>
<keyword id="KW-0573">Peptidoglycan synthesis</keyword>
<keyword id="KW-0645">Protease</keyword>
<keyword id="KW-0964">Secreted</keyword>
<keyword id="KW-0732">Signal</keyword>